<proteinExistence type="inferred from homology"/>
<reference key="1">
    <citation type="journal article" date="2010" name="BMC Genomics">
        <title>A genomic perspective on the potential of Actinobacillus succinogenes for industrial succinate production.</title>
        <authorList>
            <person name="McKinlay J.B."/>
            <person name="Laivenieks M."/>
            <person name="Schindler B.D."/>
            <person name="McKinlay A.A."/>
            <person name="Siddaramappa S."/>
            <person name="Challacombe J.F."/>
            <person name="Lowry S.R."/>
            <person name="Clum A."/>
            <person name="Lapidus A.L."/>
            <person name="Burkhart K.B."/>
            <person name="Harkins V."/>
            <person name="Vieille C."/>
        </authorList>
    </citation>
    <scope>NUCLEOTIDE SEQUENCE [LARGE SCALE GENOMIC DNA]</scope>
    <source>
        <strain>ATCC 55618 / DSM 22257 / CCUG 43843 / 130Z</strain>
    </source>
</reference>
<accession>A6VQ84</accession>
<sequence length="323" mass="37302">MFEQEQWQPTANVETLFARAKIINNIRRFFTDRGVLEVETPILSEFGVTDVHLSTFSTEFVAPQAERSKTLWLNTSPEYHMKRLLAAGTGAIFQLCHVFRNEEAGSRHNPEFTMLEWYRPHFDMYRLINEVDDLLQQILDCEPAESMSYQFAFQEFVGVDPLSAERPILVELARKYNFMCDLDEDRDTLLQFLFSTVVEPKIGQERPVAVYHFPATQAALAQISSEDHRVAERFEFYYKGLELANGFHELTDHREQLHRFEQDNVQRAKLALPQREIDRRLLGALQAGVPNTSGVALGVDRLVMIALDKKRIEEVMAFAINNA</sequence>
<gene>
    <name evidence="1" type="primary">epmA</name>
    <name type="synonym">yjeA</name>
    <name type="ordered locus">Asuc_1779</name>
</gene>
<feature type="chain" id="PRO_1000071618" description="Elongation factor P--(R)-beta-lysine ligase">
    <location>
        <begin position="1"/>
        <end position="323"/>
    </location>
</feature>
<feature type="binding site" evidence="1">
    <location>
        <begin position="76"/>
        <end position="78"/>
    </location>
    <ligand>
        <name>substrate</name>
    </ligand>
</feature>
<feature type="binding site" evidence="1">
    <location>
        <begin position="100"/>
        <end position="102"/>
    </location>
    <ligand>
        <name>ATP</name>
        <dbReference type="ChEBI" id="CHEBI:30616"/>
    </ligand>
</feature>
<feature type="binding site" evidence="1">
    <location>
        <position position="109"/>
    </location>
    <ligand>
        <name>ATP</name>
        <dbReference type="ChEBI" id="CHEBI:30616"/>
    </ligand>
</feature>
<feature type="binding site" evidence="1">
    <location>
        <position position="118"/>
    </location>
    <ligand>
        <name>substrate</name>
    </ligand>
</feature>
<feature type="binding site" evidence="1">
    <location>
        <begin position="242"/>
        <end position="243"/>
    </location>
    <ligand>
        <name>ATP</name>
        <dbReference type="ChEBI" id="CHEBI:30616"/>
    </ligand>
</feature>
<feature type="binding site" evidence="1">
    <location>
        <position position="249"/>
    </location>
    <ligand>
        <name>substrate</name>
    </ligand>
</feature>
<feature type="binding site" evidence="1">
    <location>
        <position position="298"/>
    </location>
    <ligand>
        <name>ATP</name>
        <dbReference type="ChEBI" id="CHEBI:30616"/>
    </ligand>
</feature>
<name>EPMA_ACTSZ</name>
<organism>
    <name type="scientific">Actinobacillus succinogenes (strain ATCC 55618 / DSM 22257 / CCUG 43843 / 130Z)</name>
    <dbReference type="NCBI Taxonomy" id="339671"/>
    <lineage>
        <taxon>Bacteria</taxon>
        <taxon>Pseudomonadati</taxon>
        <taxon>Pseudomonadota</taxon>
        <taxon>Gammaproteobacteria</taxon>
        <taxon>Pasteurellales</taxon>
        <taxon>Pasteurellaceae</taxon>
        <taxon>Actinobacillus</taxon>
    </lineage>
</organism>
<keyword id="KW-0067">ATP-binding</keyword>
<keyword id="KW-0436">Ligase</keyword>
<keyword id="KW-0547">Nucleotide-binding</keyword>
<keyword id="KW-1185">Reference proteome</keyword>
<comment type="function">
    <text evidence="1">With EpmB is involved in the beta-lysylation step of the post-translational modification of translation elongation factor P (EF-P). Catalyzes the ATP-dependent activation of (R)-beta-lysine produced by EpmB, forming a lysyl-adenylate, from which the beta-lysyl moiety is then transferred to the epsilon-amino group of a conserved specific lysine residue in EF-P.</text>
</comment>
<comment type="catalytic activity">
    <reaction evidence="1">
        <text>D-beta-lysine + L-lysyl-[protein] + ATP = N(6)-((3R)-3,6-diaminohexanoyl)-L-lysyl-[protein] + AMP + diphosphate + H(+)</text>
        <dbReference type="Rhea" id="RHEA:83435"/>
        <dbReference type="Rhea" id="RHEA-COMP:9752"/>
        <dbReference type="Rhea" id="RHEA-COMP:20131"/>
        <dbReference type="ChEBI" id="CHEBI:15378"/>
        <dbReference type="ChEBI" id="CHEBI:29969"/>
        <dbReference type="ChEBI" id="CHEBI:30616"/>
        <dbReference type="ChEBI" id="CHEBI:33019"/>
        <dbReference type="ChEBI" id="CHEBI:84138"/>
        <dbReference type="ChEBI" id="CHEBI:156053"/>
        <dbReference type="ChEBI" id="CHEBI:456215"/>
    </reaction>
    <physiologicalReaction direction="left-to-right" evidence="1">
        <dbReference type="Rhea" id="RHEA:83436"/>
    </physiologicalReaction>
</comment>
<comment type="subunit">
    <text evidence="1">Homodimer.</text>
</comment>
<comment type="similarity">
    <text evidence="1">Belongs to the class-II aminoacyl-tRNA synthetase family. EpmA subfamily.</text>
</comment>
<evidence type="ECO:0000255" key="1">
    <source>
        <dbReference type="HAMAP-Rule" id="MF_00174"/>
    </source>
</evidence>
<dbReference type="EC" id="6.3.2.-" evidence="1"/>
<dbReference type="EMBL" id="CP000746">
    <property type="protein sequence ID" value="ABR75131.1"/>
    <property type="molecule type" value="Genomic_DNA"/>
</dbReference>
<dbReference type="RefSeq" id="WP_012073508.1">
    <property type="nucleotide sequence ID" value="NC_009655.1"/>
</dbReference>
<dbReference type="SMR" id="A6VQ84"/>
<dbReference type="STRING" id="339671.Asuc_1779"/>
<dbReference type="KEGG" id="asu:Asuc_1779"/>
<dbReference type="eggNOG" id="COG2269">
    <property type="taxonomic scope" value="Bacteria"/>
</dbReference>
<dbReference type="HOGENOM" id="CLU_008255_1_1_6"/>
<dbReference type="OrthoDB" id="9802326at2"/>
<dbReference type="Proteomes" id="UP000001114">
    <property type="component" value="Chromosome"/>
</dbReference>
<dbReference type="GO" id="GO:0005829">
    <property type="term" value="C:cytosol"/>
    <property type="evidence" value="ECO:0007669"/>
    <property type="project" value="TreeGrafter"/>
</dbReference>
<dbReference type="GO" id="GO:0016880">
    <property type="term" value="F:acid-ammonia (or amide) ligase activity"/>
    <property type="evidence" value="ECO:0007669"/>
    <property type="project" value="UniProtKB-UniRule"/>
</dbReference>
<dbReference type="GO" id="GO:0005524">
    <property type="term" value="F:ATP binding"/>
    <property type="evidence" value="ECO:0007669"/>
    <property type="project" value="UniProtKB-UniRule"/>
</dbReference>
<dbReference type="GO" id="GO:0004824">
    <property type="term" value="F:lysine-tRNA ligase activity"/>
    <property type="evidence" value="ECO:0007669"/>
    <property type="project" value="InterPro"/>
</dbReference>
<dbReference type="GO" id="GO:0000049">
    <property type="term" value="F:tRNA binding"/>
    <property type="evidence" value="ECO:0007669"/>
    <property type="project" value="TreeGrafter"/>
</dbReference>
<dbReference type="GO" id="GO:0006430">
    <property type="term" value="P:lysyl-tRNA aminoacylation"/>
    <property type="evidence" value="ECO:0007669"/>
    <property type="project" value="InterPro"/>
</dbReference>
<dbReference type="FunFam" id="3.30.930.10:FF:000017">
    <property type="entry name" value="Elongation factor P--(R)-beta-lysine ligase"/>
    <property type="match status" value="1"/>
</dbReference>
<dbReference type="Gene3D" id="3.30.930.10">
    <property type="entry name" value="Bira Bifunctional Protein, Domain 2"/>
    <property type="match status" value="1"/>
</dbReference>
<dbReference type="HAMAP" id="MF_00174">
    <property type="entry name" value="EF_P_modif_A"/>
    <property type="match status" value="1"/>
</dbReference>
<dbReference type="InterPro" id="IPR004364">
    <property type="entry name" value="Aa-tRNA-synt_II"/>
</dbReference>
<dbReference type="InterPro" id="IPR006195">
    <property type="entry name" value="aa-tRNA-synth_II"/>
</dbReference>
<dbReference type="InterPro" id="IPR045864">
    <property type="entry name" value="aa-tRNA-synth_II/BPL/LPL"/>
</dbReference>
<dbReference type="InterPro" id="IPR004525">
    <property type="entry name" value="EpmA"/>
</dbReference>
<dbReference type="InterPro" id="IPR018149">
    <property type="entry name" value="Lys-tRNA-synth_II_C"/>
</dbReference>
<dbReference type="NCBIfam" id="TIGR00462">
    <property type="entry name" value="genX"/>
    <property type="match status" value="1"/>
</dbReference>
<dbReference type="NCBIfam" id="NF006828">
    <property type="entry name" value="PRK09350.1"/>
    <property type="match status" value="1"/>
</dbReference>
<dbReference type="PANTHER" id="PTHR42918:SF6">
    <property type="entry name" value="ELONGATION FACTOR P--(R)-BETA-LYSINE LIGASE"/>
    <property type="match status" value="1"/>
</dbReference>
<dbReference type="PANTHER" id="PTHR42918">
    <property type="entry name" value="LYSYL-TRNA SYNTHETASE"/>
    <property type="match status" value="1"/>
</dbReference>
<dbReference type="Pfam" id="PF00152">
    <property type="entry name" value="tRNA-synt_2"/>
    <property type="match status" value="1"/>
</dbReference>
<dbReference type="PRINTS" id="PR00982">
    <property type="entry name" value="TRNASYNTHLYS"/>
</dbReference>
<dbReference type="SUPFAM" id="SSF55681">
    <property type="entry name" value="Class II aaRS and biotin synthetases"/>
    <property type="match status" value="1"/>
</dbReference>
<dbReference type="PROSITE" id="PS50862">
    <property type="entry name" value="AA_TRNA_LIGASE_II"/>
    <property type="match status" value="1"/>
</dbReference>
<protein>
    <recommendedName>
        <fullName evidence="1">Elongation factor P--(R)-beta-lysine ligase</fullName>
        <shortName evidence="1">EF-P--(R)-beta-lysine ligase</shortName>
        <ecNumber evidence="1">6.3.2.-</ecNumber>
    </recommendedName>
    <alternativeName>
        <fullName evidence="1">EF-P post-translational modification enzyme A</fullName>
    </alternativeName>
    <alternativeName>
        <fullName evidence="1">EF-P-lysine lysyltransferase</fullName>
    </alternativeName>
</protein>